<reference key="1">
    <citation type="journal article" date="2001" name="Lancet">
        <title>Whole genome sequencing of meticillin-resistant Staphylococcus aureus.</title>
        <authorList>
            <person name="Kuroda M."/>
            <person name="Ohta T."/>
            <person name="Uchiyama I."/>
            <person name="Baba T."/>
            <person name="Yuzawa H."/>
            <person name="Kobayashi I."/>
            <person name="Cui L."/>
            <person name="Oguchi A."/>
            <person name="Aoki K."/>
            <person name="Nagai Y."/>
            <person name="Lian J.-Q."/>
            <person name="Ito T."/>
            <person name="Kanamori M."/>
            <person name="Matsumaru H."/>
            <person name="Maruyama A."/>
            <person name="Murakami H."/>
            <person name="Hosoyama A."/>
            <person name="Mizutani-Ui Y."/>
            <person name="Takahashi N.K."/>
            <person name="Sawano T."/>
            <person name="Inoue R."/>
            <person name="Kaito C."/>
            <person name="Sekimizu K."/>
            <person name="Hirakawa H."/>
            <person name="Kuhara S."/>
            <person name="Goto S."/>
            <person name="Yabuzaki J."/>
            <person name="Kanehisa M."/>
            <person name="Yamashita A."/>
            <person name="Oshima K."/>
            <person name="Furuya K."/>
            <person name="Yoshino C."/>
            <person name="Shiba T."/>
            <person name="Hattori M."/>
            <person name="Ogasawara N."/>
            <person name="Hayashi H."/>
            <person name="Hiramatsu K."/>
        </authorList>
    </citation>
    <scope>NUCLEOTIDE SEQUENCE [LARGE SCALE GENOMIC DNA]</scope>
    <source>
        <strain>Mu50 / ATCC 700699</strain>
    </source>
</reference>
<dbReference type="EMBL" id="BA000017">
    <property type="protein sequence ID" value="BAB57744.1"/>
    <property type="molecule type" value="Genomic_DNA"/>
</dbReference>
<dbReference type="RefSeq" id="WP_000627144.1">
    <property type="nucleotide sequence ID" value="NC_002758.2"/>
</dbReference>
<dbReference type="SMR" id="P68792"/>
<dbReference type="KEGG" id="sav:SAV1582"/>
<dbReference type="HOGENOM" id="CLU_050019_1_0_9"/>
<dbReference type="PhylomeDB" id="P68792"/>
<dbReference type="Proteomes" id="UP000002481">
    <property type="component" value="Chromosome"/>
</dbReference>
<dbReference type="GO" id="GO:0003677">
    <property type="term" value="F:DNA binding"/>
    <property type="evidence" value="ECO:0007669"/>
    <property type="project" value="InterPro"/>
</dbReference>
<dbReference type="GO" id="GO:0045892">
    <property type="term" value="P:negative regulation of DNA-templated transcription"/>
    <property type="evidence" value="ECO:0007669"/>
    <property type="project" value="UniProtKB-UniRule"/>
</dbReference>
<dbReference type="FunFam" id="1.10.10.10:FF:000049">
    <property type="entry name" value="Heat-inducible transcription repressor HrcA"/>
    <property type="match status" value="1"/>
</dbReference>
<dbReference type="Gene3D" id="3.30.450.40">
    <property type="match status" value="1"/>
</dbReference>
<dbReference type="Gene3D" id="3.30.390.60">
    <property type="entry name" value="Heat-inducible transcription repressor hrca homolog, domain 3"/>
    <property type="match status" value="1"/>
</dbReference>
<dbReference type="Gene3D" id="1.10.10.10">
    <property type="entry name" value="Winged helix-like DNA-binding domain superfamily/Winged helix DNA-binding domain"/>
    <property type="match status" value="1"/>
</dbReference>
<dbReference type="HAMAP" id="MF_00081">
    <property type="entry name" value="HrcA"/>
    <property type="match status" value="1"/>
</dbReference>
<dbReference type="InterPro" id="IPR029016">
    <property type="entry name" value="GAF-like_dom_sf"/>
</dbReference>
<dbReference type="InterPro" id="IPR002571">
    <property type="entry name" value="HrcA"/>
</dbReference>
<dbReference type="InterPro" id="IPR021153">
    <property type="entry name" value="HrcA_C"/>
</dbReference>
<dbReference type="InterPro" id="IPR036388">
    <property type="entry name" value="WH-like_DNA-bd_sf"/>
</dbReference>
<dbReference type="InterPro" id="IPR036390">
    <property type="entry name" value="WH_DNA-bd_sf"/>
</dbReference>
<dbReference type="InterPro" id="IPR023120">
    <property type="entry name" value="WHTH_transcript_rep_HrcA_IDD"/>
</dbReference>
<dbReference type="NCBIfam" id="TIGR00331">
    <property type="entry name" value="hrcA"/>
    <property type="match status" value="1"/>
</dbReference>
<dbReference type="PANTHER" id="PTHR34824">
    <property type="entry name" value="HEAT-INDUCIBLE TRANSCRIPTION REPRESSOR HRCA"/>
    <property type="match status" value="1"/>
</dbReference>
<dbReference type="PANTHER" id="PTHR34824:SF1">
    <property type="entry name" value="HEAT-INDUCIBLE TRANSCRIPTION REPRESSOR HRCA"/>
    <property type="match status" value="1"/>
</dbReference>
<dbReference type="Pfam" id="PF01628">
    <property type="entry name" value="HrcA"/>
    <property type="match status" value="1"/>
</dbReference>
<dbReference type="PIRSF" id="PIRSF005485">
    <property type="entry name" value="HrcA"/>
    <property type="match status" value="1"/>
</dbReference>
<dbReference type="SUPFAM" id="SSF55781">
    <property type="entry name" value="GAF domain-like"/>
    <property type="match status" value="1"/>
</dbReference>
<dbReference type="SUPFAM" id="SSF46785">
    <property type="entry name" value="Winged helix' DNA-binding domain"/>
    <property type="match status" value="1"/>
</dbReference>
<name>HRCA_STAAM</name>
<keyword id="KW-0678">Repressor</keyword>
<keyword id="KW-0346">Stress response</keyword>
<keyword id="KW-0804">Transcription</keyword>
<keyword id="KW-0805">Transcription regulation</keyword>
<evidence type="ECO:0000255" key="1">
    <source>
        <dbReference type="HAMAP-Rule" id="MF_00081"/>
    </source>
</evidence>
<gene>
    <name evidence="1" type="primary">hrcA</name>
    <name type="ordered locus">SAV1582</name>
</gene>
<accession>P68792</accession>
<accession>P45556</accession>
<proteinExistence type="evidence at transcript level"/>
<organism>
    <name type="scientific">Staphylococcus aureus (strain Mu50 / ATCC 700699)</name>
    <dbReference type="NCBI Taxonomy" id="158878"/>
    <lineage>
        <taxon>Bacteria</taxon>
        <taxon>Bacillati</taxon>
        <taxon>Bacillota</taxon>
        <taxon>Bacilli</taxon>
        <taxon>Bacillales</taxon>
        <taxon>Staphylococcaceae</taxon>
        <taxon>Staphylococcus</taxon>
    </lineage>
</organism>
<protein>
    <recommendedName>
        <fullName evidence="1">Heat-inducible transcription repressor HrcA</fullName>
    </recommendedName>
</protein>
<feature type="chain" id="PRO_0000182526" description="Heat-inducible transcription repressor HrcA">
    <location>
        <begin position="1"/>
        <end position="325"/>
    </location>
</feature>
<comment type="function">
    <text evidence="1">Negative regulator of class I heat shock genes (grpE-dnaK-dnaJ and groELS operons). Prevents heat-shock induction of these operons.</text>
</comment>
<comment type="induction">
    <text>By heat shock.</text>
</comment>
<comment type="similarity">
    <text evidence="1">Belongs to the HrcA family.</text>
</comment>
<sequence>MITDRQLSILNAIVEDYVDFGQPVGSKTLIERHNLNVSPATIRNEMKQLEDLNYIEKTHSSSGRSPSQLGFRYYVNRLLEQTSHQKTNKLRRLNQLLVENQYDVSSALTYFADELSNISQYTTLVVHPNHKQDIINNVHLIRANPNLVIMVIVFSSGHVEHVHLASDIPFSNDKLNTISNFVTNKLTEFNQNLQDDIVSFVQSEQEEIFINKLINTMNNHISNQSNSIYMGGKVKLIDALNESNVSSIQPILQYIESNRIAELLQDISSPNINVKIGNEIDDSLSDISIVTSQYHFDETLKGQIAVIGPTAMHYQNVIQLLNRIW</sequence>